<organism>
    <name type="scientific">Mus musculus</name>
    <name type="common">Mouse</name>
    <dbReference type="NCBI Taxonomy" id="10090"/>
    <lineage>
        <taxon>Eukaryota</taxon>
        <taxon>Metazoa</taxon>
        <taxon>Chordata</taxon>
        <taxon>Craniata</taxon>
        <taxon>Vertebrata</taxon>
        <taxon>Euteleostomi</taxon>
        <taxon>Mammalia</taxon>
        <taxon>Eutheria</taxon>
        <taxon>Euarchontoglires</taxon>
        <taxon>Glires</taxon>
        <taxon>Rodentia</taxon>
        <taxon>Myomorpha</taxon>
        <taxon>Muroidea</taxon>
        <taxon>Muridae</taxon>
        <taxon>Murinae</taxon>
        <taxon>Mus</taxon>
        <taxon>Mus</taxon>
    </lineage>
</organism>
<gene>
    <name type="primary">Trim14</name>
    <name type="synonym">Kiaa0129</name>
    <name type="synonym">Pub</name>
</gene>
<sequence length="440" mass="49641">MASETTEARAPFQPDGAYGWRCPEHSERPAELFCRRCGRCVCALCPVLGAHRGHPVGLAEEEAVRVQKLIQDCLECLATKKRQHADNIAHLEDAGERLKVYADSSKAWLTQKFTELRLLLDEEEVLAKKFIDKSTQLTLQVYREQAETCGKQIEVMDDFSTRVWGIGQEPNPVQLLQAYIATKTEMGQQMSPSELSHPVPLSFEPVKNFFKEFVEAIGNTLQTPMDTRLKENINCQLSNSSSTKPGALLKTSPSPERALFLKYARTPTLDPDTMHARLRLSPDGLTVRCSLLGRLGPRPAPRFDALRQVLGRDGFAAGRHYWEVDVQEAGVGWWVGAAYPSLRRRGASAAARLGCNRESWCVKRYDLEYWAFHDGQRSRLRPRRDPHRLGVFLDYEAGILAFYDVAGGMSHLHTFHAAFQEPLYPALRLWEGPISIPRLP</sequence>
<name>TRI14_MOUSE</name>
<protein>
    <recommendedName>
        <fullName>Tripartite motif-containing protein 14</fullName>
    </recommendedName>
    <alternativeName>
        <fullName>PU.1-binding protein</fullName>
    </alternativeName>
</protein>
<comment type="function">
    <text evidence="1 4 5 6">Plays a role in the innate immune defense against viruses. Facilitates the type I IFN response by interacting with MAVS at the outer mitochondria membrane and thereby recruiting NF-kappa-B essential modulator IKBKG/NEMO to the MAVS signalosome, leading to the activation of both the IFN regulatory factor 3/IRF3 and NF-kappa-B pathways. Positively regulates the CGAS-induced type I interferon signaling pathway by stabilizing CGAS and inhibiting its autophagic degradation (PubMed:27666593). Inhibits the transcriptional activity of SPI1 in a dose-dependent manner (PubMed:14592421). Also inhibits OPTN-mediated selective autophagic degradation of KDM4D and thereby negatively regulates H3K9me2 and H3K9me3. Mechanistically, recruits USP14 to remove the 'Lys-63'-linked ubiquitination of KDM4D, preventing its recognition by OPTN and subsequent degradation (PubMed:35145029).</text>
</comment>
<comment type="function">
    <text evidence="1 4 5">Plays an essential role in the innate immune defense against viruses and bacteria. Facilitates the type I IFN response by interacting with MAVS at the outer mitochondria membrane and thereby recruiting NF-kappa-B essential modulator IKBKG/NEMO to the MAVS signalosome, leading to the activation of both the IFN regulatory factor 3/IRF3 and NF-kappa-B pathways. Positively regulates the CGAS-induced type I interferon signaling pathway by stabilizing CGAS and inhibiting its autophagic degradation (PubMed:27666593). Acts as a scaffold between TBK1 and STAT3 to promote phosphorylation of STAT3 and resolve interferon-stimulated gene (ISG) expression. Inhibits the transcriptional activity of SPI1 in a dose-dependent manner (PubMed:14592421).</text>
</comment>
<comment type="subunit">
    <text evidence="1 4">Interacts with MAVS. Interacts with WRNIP1 and PPP6C; these interactions positively regulate the RIG-I signaling pathway. Interacts with CGAS; this interaction stabilizes CGAS and promotes type I interferon production. Interacts with USP14; this interaction mediates the cleavage of 'Lys-48'-linked ubiquitination of CGAS (By similarity). Interacts with TBK1 (By similarity). Interacts with SPI1 (PubMed:14592421). Interacts with KDM4D and USP14 (By similarity).</text>
</comment>
<comment type="subcellular location">
    <subcellularLocation>
        <location evidence="1">Mitochondrion outer membrane</location>
    </subcellularLocation>
    <subcellularLocation>
        <location evidence="1">Cytoplasmic vesicle</location>
        <location evidence="1">Phagosome</location>
    </subcellularLocation>
</comment>
<comment type="alternative products">
    <event type="alternative splicing"/>
    <isoform>
        <id>Q8BVW3-1</id>
        <name>1</name>
        <sequence type="displayed"/>
    </isoform>
    <isoform>
        <id>Q8BVW3-2</id>
        <name>2</name>
        <sequence type="described" ref="VSP_012055 VSP_012056"/>
    </isoform>
    <isoform>
        <id>Q8BVW3-3</id>
        <name>3</name>
        <sequence type="described" ref="VSP_012053 VSP_012054"/>
    </isoform>
</comment>
<comment type="tissue specificity">
    <text evidence="4">Expressed with high level in spleen, thymus, liver and testis. Expressed with low level in the brain, kidney, and skeletal muscle. Expressed in various differentiation stages of B-lymphocytes.</text>
</comment>
<comment type="domain">
    <text>The B-box zinc finger is responsible for inhibition of SPI1-mediated transcriptional activation.</text>
</comment>
<comment type="PTM">
    <text evidence="1">Ubiquitinated. Undergoes 'Lys-63'-linked polyubiquitination; this modification allows IKBKG/NEMO recruitment to MAVS. Undergoes 'Lys-48'-linked polyubiquitination by RNF125; this modification mediates its degradation via the ubiquitin-proteasome pathway.</text>
</comment>
<comment type="disruption phenotype">
    <text evidence="5 6">Knockout mice have an impaired herpes simplex virus type 1 (HSV-1)-triggered antiviral responses and become highly susceptible to lethal HSV-1 infection. n addition, TRIM14-deficient mice are more resistant to inflammation compared to WT (PubMed:35145029).</text>
</comment>
<comment type="similarity">
    <text evidence="8">Belongs to the TRIM/RBCC family.</text>
</comment>
<comment type="sequence caution" evidence="8">
    <conflict type="erroneous initiation">
        <sequence resource="EMBL-CDS" id="BAD32173"/>
    </conflict>
</comment>
<reference key="1">
    <citation type="journal article" date="2003" name="Biochem. Biophys. Res. Commun.">
        <title>Pub, a novel PU.1 binding protein, regulates the transcriptional activity of PU.1.</title>
        <authorList>
            <person name="Hirose S."/>
            <person name="Nishizumi H."/>
            <person name="Sakano H."/>
        </authorList>
    </citation>
    <scope>NUCLEOTIDE SEQUENCE [MRNA] (ISOFORM 1)</scope>
    <scope>FUNCTION</scope>
    <scope>INTERACTION WITH SPI1</scope>
    <scope>MUTAGENESIS OF HIS-51</scope>
    <scope>TISSUE SPECIFICITY</scope>
    <source>
        <strain>C57BL/6J</strain>
        <tissue>Spleen</tissue>
    </source>
</reference>
<reference key="2">
    <citation type="journal article" date="2004" name="DNA Res.">
        <title>Prediction of the coding sequences of mouse homologues of KIAA gene: IV. The complete nucleotide sequences of 500 mouse KIAA-homologous cDNAs identified by screening of terminal sequences of cDNA clones randomly sampled from size-fractionated libraries.</title>
        <authorList>
            <person name="Okazaki N."/>
            <person name="Kikuno R."/>
            <person name="Ohara R."/>
            <person name="Inamoto S."/>
            <person name="Koseki H."/>
            <person name="Hiraoka S."/>
            <person name="Saga Y."/>
            <person name="Seino S."/>
            <person name="Nishimura M."/>
            <person name="Kaisho T."/>
            <person name="Hoshino K."/>
            <person name="Kitamura H."/>
            <person name="Nagase T."/>
            <person name="Ohara O."/>
            <person name="Koga H."/>
        </authorList>
    </citation>
    <scope>NUCLEOTIDE SEQUENCE [LARGE SCALE MRNA] (ISOFORM 1)</scope>
    <source>
        <tissue>Spleen</tissue>
    </source>
</reference>
<reference key="3">
    <citation type="journal article" date="2005" name="Science">
        <title>The transcriptional landscape of the mammalian genome.</title>
        <authorList>
            <person name="Carninci P."/>
            <person name="Kasukawa T."/>
            <person name="Katayama S."/>
            <person name="Gough J."/>
            <person name="Frith M.C."/>
            <person name="Maeda N."/>
            <person name="Oyama R."/>
            <person name="Ravasi T."/>
            <person name="Lenhard B."/>
            <person name="Wells C."/>
            <person name="Kodzius R."/>
            <person name="Shimokawa K."/>
            <person name="Bajic V.B."/>
            <person name="Brenner S.E."/>
            <person name="Batalov S."/>
            <person name="Forrest A.R."/>
            <person name="Zavolan M."/>
            <person name="Davis M.J."/>
            <person name="Wilming L.G."/>
            <person name="Aidinis V."/>
            <person name="Allen J.E."/>
            <person name="Ambesi-Impiombato A."/>
            <person name="Apweiler R."/>
            <person name="Aturaliya R.N."/>
            <person name="Bailey T.L."/>
            <person name="Bansal M."/>
            <person name="Baxter L."/>
            <person name="Beisel K.W."/>
            <person name="Bersano T."/>
            <person name="Bono H."/>
            <person name="Chalk A.M."/>
            <person name="Chiu K.P."/>
            <person name="Choudhary V."/>
            <person name="Christoffels A."/>
            <person name="Clutterbuck D.R."/>
            <person name="Crowe M.L."/>
            <person name="Dalla E."/>
            <person name="Dalrymple B.P."/>
            <person name="de Bono B."/>
            <person name="Della Gatta G."/>
            <person name="di Bernardo D."/>
            <person name="Down T."/>
            <person name="Engstrom P."/>
            <person name="Fagiolini M."/>
            <person name="Faulkner G."/>
            <person name="Fletcher C.F."/>
            <person name="Fukushima T."/>
            <person name="Furuno M."/>
            <person name="Futaki S."/>
            <person name="Gariboldi M."/>
            <person name="Georgii-Hemming P."/>
            <person name="Gingeras T.R."/>
            <person name="Gojobori T."/>
            <person name="Green R.E."/>
            <person name="Gustincich S."/>
            <person name="Harbers M."/>
            <person name="Hayashi Y."/>
            <person name="Hensch T.K."/>
            <person name="Hirokawa N."/>
            <person name="Hill D."/>
            <person name="Huminiecki L."/>
            <person name="Iacono M."/>
            <person name="Ikeo K."/>
            <person name="Iwama A."/>
            <person name="Ishikawa T."/>
            <person name="Jakt M."/>
            <person name="Kanapin A."/>
            <person name="Katoh M."/>
            <person name="Kawasawa Y."/>
            <person name="Kelso J."/>
            <person name="Kitamura H."/>
            <person name="Kitano H."/>
            <person name="Kollias G."/>
            <person name="Krishnan S.P."/>
            <person name="Kruger A."/>
            <person name="Kummerfeld S.K."/>
            <person name="Kurochkin I.V."/>
            <person name="Lareau L.F."/>
            <person name="Lazarevic D."/>
            <person name="Lipovich L."/>
            <person name="Liu J."/>
            <person name="Liuni S."/>
            <person name="McWilliam S."/>
            <person name="Madan Babu M."/>
            <person name="Madera M."/>
            <person name="Marchionni L."/>
            <person name="Matsuda H."/>
            <person name="Matsuzawa S."/>
            <person name="Miki H."/>
            <person name="Mignone F."/>
            <person name="Miyake S."/>
            <person name="Morris K."/>
            <person name="Mottagui-Tabar S."/>
            <person name="Mulder N."/>
            <person name="Nakano N."/>
            <person name="Nakauchi H."/>
            <person name="Ng P."/>
            <person name="Nilsson R."/>
            <person name="Nishiguchi S."/>
            <person name="Nishikawa S."/>
            <person name="Nori F."/>
            <person name="Ohara O."/>
            <person name="Okazaki Y."/>
            <person name="Orlando V."/>
            <person name="Pang K.C."/>
            <person name="Pavan W.J."/>
            <person name="Pavesi G."/>
            <person name="Pesole G."/>
            <person name="Petrovsky N."/>
            <person name="Piazza S."/>
            <person name="Reed J."/>
            <person name="Reid J.F."/>
            <person name="Ring B.Z."/>
            <person name="Ringwald M."/>
            <person name="Rost B."/>
            <person name="Ruan Y."/>
            <person name="Salzberg S.L."/>
            <person name="Sandelin A."/>
            <person name="Schneider C."/>
            <person name="Schoenbach C."/>
            <person name="Sekiguchi K."/>
            <person name="Semple C.A."/>
            <person name="Seno S."/>
            <person name="Sessa L."/>
            <person name="Sheng Y."/>
            <person name="Shibata Y."/>
            <person name="Shimada H."/>
            <person name="Shimada K."/>
            <person name="Silva D."/>
            <person name="Sinclair B."/>
            <person name="Sperling S."/>
            <person name="Stupka E."/>
            <person name="Sugiura K."/>
            <person name="Sultana R."/>
            <person name="Takenaka Y."/>
            <person name="Taki K."/>
            <person name="Tammoja K."/>
            <person name="Tan S.L."/>
            <person name="Tang S."/>
            <person name="Taylor M.S."/>
            <person name="Tegner J."/>
            <person name="Teichmann S.A."/>
            <person name="Ueda H.R."/>
            <person name="van Nimwegen E."/>
            <person name="Verardo R."/>
            <person name="Wei C.L."/>
            <person name="Yagi K."/>
            <person name="Yamanishi H."/>
            <person name="Zabarovsky E."/>
            <person name="Zhu S."/>
            <person name="Zimmer A."/>
            <person name="Hide W."/>
            <person name="Bult C."/>
            <person name="Grimmond S.M."/>
            <person name="Teasdale R.D."/>
            <person name="Liu E.T."/>
            <person name="Brusic V."/>
            <person name="Quackenbush J."/>
            <person name="Wahlestedt C."/>
            <person name="Mattick J.S."/>
            <person name="Hume D.A."/>
            <person name="Kai C."/>
            <person name="Sasaki D."/>
            <person name="Tomaru Y."/>
            <person name="Fukuda S."/>
            <person name="Kanamori-Katayama M."/>
            <person name="Suzuki M."/>
            <person name="Aoki J."/>
            <person name="Arakawa T."/>
            <person name="Iida J."/>
            <person name="Imamura K."/>
            <person name="Itoh M."/>
            <person name="Kato T."/>
            <person name="Kawaji H."/>
            <person name="Kawagashira N."/>
            <person name="Kawashima T."/>
            <person name="Kojima M."/>
            <person name="Kondo S."/>
            <person name="Konno H."/>
            <person name="Nakano K."/>
            <person name="Ninomiya N."/>
            <person name="Nishio T."/>
            <person name="Okada M."/>
            <person name="Plessy C."/>
            <person name="Shibata K."/>
            <person name="Shiraki T."/>
            <person name="Suzuki S."/>
            <person name="Tagami M."/>
            <person name="Waki K."/>
            <person name="Watahiki A."/>
            <person name="Okamura-Oho Y."/>
            <person name="Suzuki H."/>
            <person name="Kawai J."/>
            <person name="Hayashizaki Y."/>
        </authorList>
    </citation>
    <scope>NUCLEOTIDE SEQUENCE [LARGE SCALE MRNA] (ISOFORMS 2 AND 3)</scope>
    <source>
        <strain>C57BL/6J</strain>
        <tissue>Skin</tissue>
    </source>
</reference>
<reference key="4">
    <citation type="journal article" date="2009" name="PLoS Biol.">
        <title>Lineage-specific biology revealed by a finished genome assembly of the mouse.</title>
        <authorList>
            <person name="Church D.M."/>
            <person name="Goodstadt L."/>
            <person name="Hillier L.W."/>
            <person name="Zody M.C."/>
            <person name="Goldstein S."/>
            <person name="She X."/>
            <person name="Bult C.J."/>
            <person name="Agarwala R."/>
            <person name="Cherry J.L."/>
            <person name="DiCuccio M."/>
            <person name="Hlavina W."/>
            <person name="Kapustin Y."/>
            <person name="Meric P."/>
            <person name="Maglott D."/>
            <person name="Birtle Z."/>
            <person name="Marques A.C."/>
            <person name="Graves T."/>
            <person name="Zhou S."/>
            <person name="Teague B."/>
            <person name="Potamousis K."/>
            <person name="Churas C."/>
            <person name="Place M."/>
            <person name="Herschleb J."/>
            <person name="Runnheim R."/>
            <person name="Forrest D."/>
            <person name="Amos-Landgraf J."/>
            <person name="Schwartz D.C."/>
            <person name="Cheng Z."/>
            <person name="Lindblad-Toh K."/>
            <person name="Eichler E.E."/>
            <person name="Ponting C.P."/>
        </authorList>
    </citation>
    <scope>NUCLEOTIDE SEQUENCE [LARGE SCALE GENOMIC DNA]</scope>
    <source>
        <strain>C57BL/6J</strain>
    </source>
</reference>
<reference key="5">
    <citation type="journal article" date="2016" name="Mol. Cell">
        <title>TRIM14 inhibits cGAS degradation mediated by selective autophagy receptor p62 to promote innate immune responses.</title>
        <authorList>
            <person name="Chen M."/>
            <person name="Meng Q."/>
            <person name="Qin Y."/>
            <person name="Liang P."/>
            <person name="Tan P."/>
            <person name="He L."/>
            <person name="Zhou Y."/>
            <person name="Chen Y."/>
            <person name="Huang J."/>
            <person name="Wang R.F."/>
            <person name="Cui J."/>
        </authorList>
    </citation>
    <scope>FUNCTION</scope>
    <scope>DISRUPTION PHENOTYPE</scope>
</reference>
<reference key="6">
    <citation type="journal article" date="2022" name="Proc. Natl. Acad. Sci. U.S.A.">
        <title>TRIM14 inhibits OPTN-mediated autophagic degradation of KDM4D to epigenetically regulate inflammation.</title>
        <authorList>
            <person name="Liu D."/>
            <person name="Zhao Z."/>
            <person name="She Y."/>
            <person name="Zhang L."/>
            <person name="Chen X."/>
            <person name="Ma L."/>
            <person name="Cui J."/>
        </authorList>
    </citation>
    <scope>FUNCTION</scope>
    <scope>DISRUPTION PHENOTYPE</scope>
</reference>
<dbReference type="EMBL" id="AB117644">
    <property type="protein sequence ID" value="BAD02394.1"/>
    <property type="molecule type" value="mRNA"/>
</dbReference>
<dbReference type="EMBL" id="AK172895">
    <property type="protein sequence ID" value="BAD32173.1"/>
    <property type="status" value="ALT_INIT"/>
    <property type="molecule type" value="mRNA"/>
</dbReference>
<dbReference type="EMBL" id="AK017887">
    <property type="protein sequence ID" value="BAB30988.1"/>
    <property type="molecule type" value="mRNA"/>
</dbReference>
<dbReference type="EMBL" id="AK076277">
    <property type="protein sequence ID" value="BAC36286.1"/>
    <property type="molecule type" value="mRNA"/>
</dbReference>
<dbReference type="EMBL" id="AL683884">
    <property type="status" value="NOT_ANNOTATED_CDS"/>
    <property type="molecule type" value="Genomic_DNA"/>
</dbReference>
<dbReference type="CCDS" id="CCDS18153.1">
    <molecule id="Q8BVW3-1"/>
</dbReference>
<dbReference type="RefSeq" id="NP_083353.1">
    <molecule id="Q8BVW3-1"/>
    <property type="nucleotide sequence ID" value="NM_029077.4"/>
</dbReference>
<dbReference type="SMR" id="Q8BVW3"/>
<dbReference type="BioGRID" id="216982">
    <property type="interactions" value="3"/>
</dbReference>
<dbReference type="FunCoup" id="Q8BVW3">
    <property type="interactions" value="409"/>
</dbReference>
<dbReference type="STRING" id="10090.ENSMUSP00000038719"/>
<dbReference type="iPTMnet" id="Q8BVW3"/>
<dbReference type="PhosphoSitePlus" id="Q8BVW3"/>
<dbReference type="jPOST" id="Q8BVW3"/>
<dbReference type="PaxDb" id="10090-ENSMUSP00000038719"/>
<dbReference type="PeptideAtlas" id="Q8BVW3"/>
<dbReference type="ProteomicsDB" id="298292">
    <molecule id="Q8BVW3-1"/>
</dbReference>
<dbReference type="ProteomicsDB" id="298293">
    <molecule id="Q8BVW3-2"/>
</dbReference>
<dbReference type="ProteomicsDB" id="298294">
    <molecule id="Q8BVW3-3"/>
</dbReference>
<dbReference type="Antibodypedia" id="14448">
    <property type="antibodies" value="132 antibodies from 24 providers"/>
</dbReference>
<dbReference type="DNASU" id="74735"/>
<dbReference type="Ensembl" id="ENSMUST00000046897.13">
    <molecule id="Q8BVW3-1"/>
    <property type="protein sequence ID" value="ENSMUSP00000038719.7"/>
    <property type="gene ID" value="ENSMUSG00000039853.19"/>
</dbReference>
<dbReference type="Ensembl" id="ENSMUST00000102924.3">
    <molecule id="Q8BVW3-2"/>
    <property type="protein sequence ID" value="ENSMUSP00000099988.3"/>
    <property type="gene ID" value="ENSMUSG00000039853.19"/>
</dbReference>
<dbReference type="Ensembl" id="ENSMUST00000184112.8">
    <molecule id="Q8BVW3-3"/>
    <property type="protein sequence ID" value="ENSMUSP00000138876.2"/>
    <property type="gene ID" value="ENSMUSG00000039853.19"/>
</dbReference>
<dbReference type="GeneID" id="74735"/>
<dbReference type="KEGG" id="mmu:74735"/>
<dbReference type="UCSC" id="uc008stw.2">
    <molecule id="Q8BVW3-1"/>
    <property type="organism name" value="mouse"/>
</dbReference>
<dbReference type="UCSC" id="uc008sty.2">
    <molecule id="Q8BVW3-2"/>
    <property type="organism name" value="mouse"/>
</dbReference>
<dbReference type="AGR" id="MGI:1921985"/>
<dbReference type="CTD" id="9830"/>
<dbReference type="MGI" id="MGI:1921985">
    <property type="gene designation" value="Trim14"/>
</dbReference>
<dbReference type="VEuPathDB" id="HostDB:ENSMUSG00000039853"/>
<dbReference type="eggNOG" id="ENOG502QTZS">
    <property type="taxonomic scope" value="Eukaryota"/>
</dbReference>
<dbReference type="GeneTree" id="ENSGT00940000161010"/>
<dbReference type="HOGENOM" id="CLU_013137_1_0_1"/>
<dbReference type="InParanoid" id="Q8BVW3"/>
<dbReference type="OMA" id="WWIGAAY"/>
<dbReference type="OrthoDB" id="6105938at2759"/>
<dbReference type="PhylomeDB" id="Q8BVW3"/>
<dbReference type="TreeFam" id="TF351014"/>
<dbReference type="BioGRID-ORCS" id="74735">
    <property type="hits" value="1 hit in 76 CRISPR screens"/>
</dbReference>
<dbReference type="ChiTaRS" id="Trim14">
    <property type="organism name" value="mouse"/>
</dbReference>
<dbReference type="PRO" id="PR:Q8BVW3"/>
<dbReference type="Proteomes" id="UP000000589">
    <property type="component" value="Chromosome 4"/>
</dbReference>
<dbReference type="RNAct" id="Q8BVW3">
    <property type="molecule type" value="protein"/>
</dbReference>
<dbReference type="Bgee" id="ENSMUSG00000039853">
    <property type="expression patterns" value="Expressed in ureteric bud trunk and 62 other cell types or tissues"/>
</dbReference>
<dbReference type="ExpressionAtlas" id="Q8BVW3">
    <property type="expression patterns" value="baseline and differential"/>
</dbReference>
<dbReference type="GO" id="GO:0005741">
    <property type="term" value="C:mitochondrial outer membrane"/>
    <property type="evidence" value="ECO:0007669"/>
    <property type="project" value="UniProtKB-SubCell"/>
</dbReference>
<dbReference type="GO" id="GO:0045335">
    <property type="term" value="C:phagocytic vesicle"/>
    <property type="evidence" value="ECO:0007669"/>
    <property type="project" value="UniProtKB-SubCell"/>
</dbReference>
<dbReference type="GO" id="GO:0003713">
    <property type="term" value="F:transcription coactivator activity"/>
    <property type="evidence" value="ECO:0007669"/>
    <property type="project" value="Ensembl"/>
</dbReference>
<dbReference type="GO" id="GO:0008270">
    <property type="term" value="F:zinc ion binding"/>
    <property type="evidence" value="ECO:0007669"/>
    <property type="project" value="UniProtKB-KW"/>
</dbReference>
<dbReference type="GO" id="GO:0006954">
    <property type="term" value="P:inflammatory response"/>
    <property type="evidence" value="ECO:0007669"/>
    <property type="project" value="Ensembl"/>
</dbReference>
<dbReference type="GO" id="GO:0045087">
    <property type="term" value="P:innate immune response"/>
    <property type="evidence" value="ECO:0007669"/>
    <property type="project" value="UniProtKB-KW"/>
</dbReference>
<dbReference type="GO" id="GO:0032897">
    <property type="term" value="P:negative regulation of viral transcription"/>
    <property type="evidence" value="ECO:0007669"/>
    <property type="project" value="Ensembl"/>
</dbReference>
<dbReference type="CDD" id="cd19768">
    <property type="entry name" value="Bbox2_TRIM14"/>
    <property type="match status" value="1"/>
</dbReference>
<dbReference type="CDD" id="cd13738">
    <property type="entry name" value="SPRY_PRY_TRIM14"/>
    <property type="match status" value="1"/>
</dbReference>
<dbReference type="Gene3D" id="2.60.120.920">
    <property type="match status" value="1"/>
</dbReference>
<dbReference type="Gene3D" id="3.30.160.60">
    <property type="entry name" value="Classic Zinc Finger"/>
    <property type="match status" value="1"/>
</dbReference>
<dbReference type="InterPro" id="IPR001870">
    <property type="entry name" value="B30.2/SPRY"/>
</dbReference>
<dbReference type="InterPro" id="IPR043136">
    <property type="entry name" value="B30.2/SPRY_sf"/>
</dbReference>
<dbReference type="InterPro" id="IPR003879">
    <property type="entry name" value="Butyrophylin_SPRY"/>
</dbReference>
<dbReference type="InterPro" id="IPR013320">
    <property type="entry name" value="ConA-like_dom_sf"/>
</dbReference>
<dbReference type="InterPro" id="IPR051051">
    <property type="entry name" value="E3_ubiq-ligase_TRIM/RNF"/>
</dbReference>
<dbReference type="InterPro" id="IPR006574">
    <property type="entry name" value="PRY"/>
</dbReference>
<dbReference type="InterPro" id="IPR003877">
    <property type="entry name" value="SPRY_dom"/>
</dbReference>
<dbReference type="InterPro" id="IPR044116">
    <property type="entry name" value="SPRY_PRY_TRIM14"/>
</dbReference>
<dbReference type="InterPro" id="IPR000315">
    <property type="entry name" value="Znf_B-box"/>
</dbReference>
<dbReference type="PANTHER" id="PTHR25465">
    <property type="entry name" value="B-BOX DOMAIN CONTAINING"/>
    <property type="match status" value="1"/>
</dbReference>
<dbReference type="PANTHER" id="PTHR25465:SF11">
    <property type="entry name" value="TRIPARTITE MOTIF CONTAINING 14"/>
    <property type="match status" value="1"/>
</dbReference>
<dbReference type="Pfam" id="PF13765">
    <property type="entry name" value="PRY"/>
    <property type="match status" value="1"/>
</dbReference>
<dbReference type="Pfam" id="PF00622">
    <property type="entry name" value="SPRY"/>
    <property type="match status" value="1"/>
</dbReference>
<dbReference type="Pfam" id="PF00643">
    <property type="entry name" value="zf-B_box"/>
    <property type="match status" value="1"/>
</dbReference>
<dbReference type="PRINTS" id="PR01407">
    <property type="entry name" value="BUTYPHLNCDUF"/>
</dbReference>
<dbReference type="SMART" id="SM00336">
    <property type="entry name" value="BBOX"/>
    <property type="match status" value="1"/>
</dbReference>
<dbReference type="SMART" id="SM00589">
    <property type="entry name" value="PRY"/>
    <property type="match status" value="1"/>
</dbReference>
<dbReference type="SMART" id="SM00449">
    <property type="entry name" value="SPRY"/>
    <property type="match status" value="1"/>
</dbReference>
<dbReference type="SUPFAM" id="SSF57845">
    <property type="entry name" value="B-box zinc-binding domain"/>
    <property type="match status" value="1"/>
</dbReference>
<dbReference type="SUPFAM" id="SSF49899">
    <property type="entry name" value="Concanavalin A-like lectins/glucanases"/>
    <property type="match status" value="1"/>
</dbReference>
<dbReference type="PROSITE" id="PS50188">
    <property type="entry name" value="B302_SPRY"/>
    <property type="match status" value="1"/>
</dbReference>
<dbReference type="PROSITE" id="PS50119">
    <property type="entry name" value="ZF_BBOX"/>
    <property type="match status" value="1"/>
</dbReference>
<keyword id="KW-0025">Alternative splicing</keyword>
<keyword id="KW-0968">Cytoplasmic vesicle</keyword>
<keyword id="KW-0391">Immunity</keyword>
<keyword id="KW-0399">Innate immunity</keyword>
<keyword id="KW-0472">Membrane</keyword>
<keyword id="KW-0479">Metal-binding</keyword>
<keyword id="KW-0496">Mitochondrion</keyword>
<keyword id="KW-1000">Mitochondrion outer membrane</keyword>
<keyword id="KW-1185">Reference proteome</keyword>
<keyword id="KW-0832">Ubl conjugation</keyword>
<keyword id="KW-0862">Zinc</keyword>
<keyword id="KW-0863">Zinc-finger</keyword>
<evidence type="ECO:0000250" key="1">
    <source>
        <dbReference type="UniProtKB" id="Q14142"/>
    </source>
</evidence>
<evidence type="ECO:0000255" key="2">
    <source>
        <dbReference type="PROSITE-ProRule" id="PRU00024"/>
    </source>
</evidence>
<evidence type="ECO:0000255" key="3">
    <source>
        <dbReference type="PROSITE-ProRule" id="PRU00548"/>
    </source>
</evidence>
<evidence type="ECO:0000269" key="4">
    <source>
    </source>
</evidence>
<evidence type="ECO:0000269" key="5">
    <source>
    </source>
</evidence>
<evidence type="ECO:0000269" key="6">
    <source>
    </source>
</evidence>
<evidence type="ECO:0000303" key="7">
    <source>
    </source>
</evidence>
<evidence type="ECO:0000305" key="8"/>
<accession>Q8BVW3</accession>
<accession>B1AVH3</accession>
<accession>Q6A0C3</accession>
<accession>Q762I6</accession>
<accession>Q9D3G8</accession>
<proteinExistence type="evidence at protein level"/>
<feature type="chain" id="PRO_0000220371" description="Tripartite motif-containing protein 14">
    <location>
        <begin position="1"/>
        <end position="440"/>
    </location>
</feature>
<feature type="domain" description="B30.2/SPRY" evidence="3">
    <location>
        <begin position="247"/>
        <end position="440"/>
    </location>
</feature>
<feature type="zinc finger region" description="B box-type" evidence="2">
    <location>
        <begin position="17"/>
        <end position="59"/>
    </location>
</feature>
<feature type="binding site" evidence="2">
    <location>
        <position position="22"/>
    </location>
    <ligand>
        <name>Zn(2+)</name>
        <dbReference type="ChEBI" id="CHEBI:29105"/>
    </ligand>
</feature>
<feature type="binding site" evidence="2">
    <location>
        <position position="25"/>
    </location>
    <ligand>
        <name>Zn(2+)</name>
        <dbReference type="ChEBI" id="CHEBI:29105"/>
    </ligand>
</feature>
<feature type="binding site" evidence="2">
    <location>
        <position position="45"/>
    </location>
    <ligand>
        <name>Zn(2+)</name>
        <dbReference type="ChEBI" id="CHEBI:29105"/>
    </ligand>
</feature>
<feature type="binding site" evidence="2">
    <location>
        <position position="51"/>
    </location>
    <ligand>
        <name>Zn(2+)</name>
        <dbReference type="ChEBI" id="CHEBI:29105"/>
    </ligand>
</feature>
<feature type="splice variant" id="VSP_012053" description="In isoform 3." evidence="7">
    <original>A</original>
    <variation>T</variation>
    <location>
        <position position="178"/>
    </location>
</feature>
<feature type="splice variant" id="VSP_012054" description="In isoform 3." evidence="7">
    <location>
        <begin position="179"/>
        <end position="440"/>
    </location>
</feature>
<feature type="splice variant" id="VSP_012055" description="In isoform 2." evidence="7">
    <original>YARTPTLDPDTMHARLRLSPD</original>
    <variation>CETGEWEREVGWEQRWMGARK</variation>
    <location>
        <begin position="263"/>
        <end position="283"/>
    </location>
</feature>
<feature type="splice variant" id="VSP_012056" description="In isoform 2." evidence="7">
    <location>
        <begin position="284"/>
        <end position="440"/>
    </location>
</feature>
<feature type="mutagenesis site" description="Loss of inhibition of SPI1-mediated transcriptional activation." evidence="4">
    <original>H</original>
    <variation>N</variation>
    <location>
        <position position="51"/>
    </location>
</feature>
<feature type="sequence conflict" description="In Ref. 3; BAB30988." evidence="8" ref="3">
    <original>A</original>
    <variation>T</variation>
    <location>
        <position position="43"/>
    </location>
</feature>
<feature type="sequence conflict" description="In Ref. 3; BAC36286." evidence="8" ref="3">
    <original>H</original>
    <variation>P</variation>
    <location>
        <position position="84"/>
    </location>
</feature>